<protein>
    <recommendedName>
        <fullName evidence="1">Probable endonuclease 4</fullName>
        <ecNumber evidence="1">3.1.21.2</ecNumber>
    </recommendedName>
    <alternativeName>
        <fullName evidence="1">Endodeoxyribonuclease IV</fullName>
    </alternativeName>
    <alternativeName>
        <fullName evidence="1">Endonuclease IV</fullName>
    </alternativeName>
</protein>
<dbReference type="EC" id="3.1.21.2" evidence="1"/>
<dbReference type="EMBL" id="FM200053">
    <property type="protein sequence ID" value="CAR58738.1"/>
    <property type="molecule type" value="Genomic_DNA"/>
</dbReference>
<dbReference type="RefSeq" id="WP_000873907.1">
    <property type="nucleotide sequence ID" value="NC_011147.1"/>
</dbReference>
<dbReference type="SMR" id="B5BE34"/>
<dbReference type="KEGG" id="sek:SSPA0609"/>
<dbReference type="HOGENOM" id="CLU_025885_0_4_6"/>
<dbReference type="Proteomes" id="UP000001869">
    <property type="component" value="Chromosome"/>
</dbReference>
<dbReference type="GO" id="GO:0008833">
    <property type="term" value="F:deoxyribonuclease IV (phage-T4-induced) activity"/>
    <property type="evidence" value="ECO:0007669"/>
    <property type="project" value="UniProtKB-UniRule"/>
</dbReference>
<dbReference type="GO" id="GO:0003677">
    <property type="term" value="F:DNA binding"/>
    <property type="evidence" value="ECO:0007669"/>
    <property type="project" value="InterPro"/>
</dbReference>
<dbReference type="GO" id="GO:0003906">
    <property type="term" value="F:DNA-(apurinic or apyrimidinic site) endonuclease activity"/>
    <property type="evidence" value="ECO:0007669"/>
    <property type="project" value="TreeGrafter"/>
</dbReference>
<dbReference type="GO" id="GO:0008081">
    <property type="term" value="F:phosphoric diester hydrolase activity"/>
    <property type="evidence" value="ECO:0007669"/>
    <property type="project" value="TreeGrafter"/>
</dbReference>
<dbReference type="GO" id="GO:0008270">
    <property type="term" value="F:zinc ion binding"/>
    <property type="evidence" value="ECO:0007669"/>
    <property type="project" value="UniProtKB-UniRule"/>
</dbReference>
<dbReference type="GO" id="GO:0006284">
    <property type="term" value="P:base-excision repair"/>
    <property type="evidence" value="ECO:0007669"/>
    <property type="project" value="TreeGrafter"/>
</dbReference>
<dbReference type="CDD" id="cd00019">
    <property type="entry name" value="AP2Ec"/>
    <property type="match status" value="1"/>
</dbReference>
<dbReference type="FunFam" id="3.20.20.150:FF:000001">
    <property type="entry name" value="Probable endonuclease 4"/>
    <property type="match status" value="1"/>
</dbReference>
<dbReference type="Gene3D" id="3.20.20.150">
    <property type="entry name" value="Divalent-metal-dependent TIM barrel enzymes"/>
    <property type="match status" value="1"/>
</dbReference>
<dbReference type="HAMAP" id="MF_00152">
    <property type="entry name" value="Nfo"/>
    <property type="match status" value="1"/>
</dbReference>
<dbReference type="InterPro" id="IPR001719">
    <property type="entry name" value="AP_endonuc_2"/>
</dbReference>
<dbReference type="InterPro" id="IPR018246">
    <property type="entry name" value="AP_endonuc_F2_Zn_BS"/>
</dbReference>
<dbReference type="InterPro" id="IPR036237">
    <property type="entry name" value="Xyl_isomerase-like_sf"/>
</dbReference>
<dbReference type="InterPro" id="IPR013022">
    <property type="entry name" value="Xyl_isomerase-like_TIM-brl"/>
</dbReference>
<dbReference type="NCBIfam" id="TIGR00587">
    <property type="entry name" value="nfo"/>
    <property type="match status" value="1"/>
</dbReference>
<dbReference type="NCBIfam" id="NF002199">
    <property type="entry name" value="PRK01060.1-4"/>
    <property type="match status" value="1"/>
</dbReference>
<dbReference type="PANTHER" id="PTHR21445:SF0">
    <property type="entry name" value="APURINIC-APYRIMIDINIC ENDONUCLEASE"/>
    <property type="match status" value="1"/>
</dbReference>
<dbReference type="PANTHER" id="PTHR21445">
    <property type="entry name" value="ENDONUCLEASE IV ENDODEOXYRIBONUCLEASE IV"/>
    <property type="match status" value="1"/>
</dbReference>
<dbReference type="Pfam" id="PF01261">
    <property type="entry name" value="AP_endonuc_2"/>
    <property type="match status" value="1"/>
</dbReference>
<dbReference type="SMART" id="SM00518">
    <property type="entry name" value="AP2Ec"/>
    <property type="match status" value="1"/>
</dbReference>
<dbReference type="SUPFAM" id="SSF51658">
    <property type="entry name" value="Xylose isomerase-like"/>
    <property type="match status" value="1"/>
</dbReference>
<dbReference type="PROSITE" id="PS00729">
    <property type="entry name" value="AP_NUCLEASE_F2_1"/>
    <property type="match status" value="1"/>
</dbReference>
<dbReference type="PROSITE" id="PS00730">
    <property type="entry name" value="AP_NUCLEASE_F2_2"/>
    <property type="match status" value="1"/>
</dbReference>
<dbReference type="PROSITE" id="PS00731">
    <property type="entry name" value="AP_NUCLEASE_F2_3"/>
    <property type="match status" value="1"/>
</dbReference>
<dbReference type="PROSITE" id="PS51432">
    <property type="entry name" value="AP_NUCLEASE_F2_4"/>
    <property type="match status" value="1"/>
</dbReference>
<keyword id="KW-0227">DNA damage</keyword>
<keyword id="KW-0234">DNA repair</keyword>
<keyword id="KW-0255">Endonuclease</keyword>
<keyword id="KW-0378">Hydrolase</keyword>
<keyword id="KW-0479">Metal-binding</keyword>
<keyword id="KW-0540">Nuclease</keyword>
<keyword id="KW-0862">Zinc</keyword>
<sequence>MKYIGAHVSAAGGLANAPARAAEIGATAFALFTKNQRQWRAAPLTPQVIDDFKIACEKYHFSAAQILPHDSYLINLGHPVSEALEKSRDAFLDEMQRCEQLGLTLLNFHPGSHLMQIAQEDCLARIAESINIALAQTEGVTAVIENTAGQGSNLGFEFEQLAAIIDGVEDKSRVGVCIDTCHAFAAGYDLRTPEACEKTFAEFGKIVGFQYLRGMHLNDAKSAFGSRVDRHHSLGEGNIGHDAFRWIMQDARFDGIPLILETINPDIWAEEIAWLKAQQIAEVMA</sequence>
<evidence type="ECO:0000255" key="1">
    <source>
        <dbReference type="HAMAP-Rule" id="MF_00152"/>
    </source>
</evidence>
<comment type="function">
    <text evidence="1">Endonuclease IV plays a role in DNA repair. It cleaves phosphodiester bonds at apurinic or apyrimidinic (AP) sites, generating a 3'-hydroxyl group and a 5'-terminal sugar phosphate.</text>
</comment>
<comment type="catalytic activity">
    <reaction evidence="1">
        <text>Endonucleolytic cleavage to 5'-phosphooligonucleotide end-products.</text>
        <dbReference type="EC" id="3.1.21.2"/>
    </reaction>
</comment>
<comment type="cofactor">
    <cofactor evidence="1">
        <name>Zn(2+)</name>
        <dbReference type="ChEBI" id="CHEBI:29105"/>
    </cofactor>
    <text evidence="1">Binds 3 Zn(2+) ions.</text>
</comment>
<comment type="similarity">
    <text evidence="1">Belongs to the AP endonuclease 2 family.</text>
</comment>
<accession>B5BE34</accession>
<reference key="1">
    <citation type="journal article" date="2009" name="BMC Genomics">
        <title>Pseudogene accumulation in the evolutionary histories of Salmonella enterica serovars Paratyphi A and Typhi.</title>
        <authorList>
            <person name="Holt K.E."/>
            <person name="Thomson N.R."/>
            <person name="Wain J."/>
            <person name="Langridge G.C."/>
            <person name="Hasan R."/>
            <person name="Bhutta Z.A."/>
            <person name="Quail M.A."/>
            <person name="Norbertczak H."/>
            <person name="Walker D."/>
            <person name="Simmonds M."/>
            <person name="White B."/>
            <person name="Bason N."/>
            <person name="Mungall K."/>
            <person name="Dougan G."/>
            <person name="Parkhill J."/>
        </authorList>
    </citation>
    <scope>NUCLEOTIDE SEQUENCE [LARGE SCALE GENOMIC DNA]</scope>
    <source>
        <strain>AKU_12601</strain>
    </source>
</reference>
<organism>
    <name type="scientific">Salmonella paratyphi A (strain AKU_12601)</name>
    <dbReference type="NCBI Taxonomy" id="554290"/>
    <lineage>
        <taxon>Bacteria</taxon>
        <taxon>Pseudomonadati</taxon>
        <taxon>Pseudomonadota</taxon>
        <taxon>Gammaproteobacteria</taxon>
        <taxon>Enterobacterales</taxon>
        <taxon>Enterobacteriaceae</taxon>
        <taxon>Salmonella</taxon>
    </lineage>
</organism>
<gene>
    <name evidence="1" type="primary">nfo</name>
    <name type="ordered locus">SSPA0609</name>
</gene>
<proteinExistence type="inferred from homology"/>
<feature type="chain" id="PRO_1000096904" description="Probable endonuclease 4">
    <location>
        <begin position="1"/>
        <end position="285"/>
    </location>
</feature>
<feature type="binding site" evidence="1">
    <location>
        <position position="69"/>
    </location>
    <ligand>
        <name>Zn(2+)</name>
        <dbReference type="ChEBI" id="CHEBI:29105"/>
        <label>1</label>
    </ligand>
</feature>
<feature type="binding site" evidence="1">
    <location>
        <position position="109"/>
    </location>
    <ligand>
        <name>Zn(2+)</name>
        <dbReference type="ChEBI" id="CHEBI:29105"/>
        <label>1</label>
    </ligand>
</feature>
<feature type="binding site" evidence="1">
    <location>
        <position position="145"/>
    </location>
    <ligand>
        <name>Zn(2+)</name>
        <dbReference type="ChEBI" id="CHEBI:29105"/>
        <label>1</label>
    </ligand>
</feature>
<feature type="binding site" evidence="1">
    <location>
        <position position="145"/>
    </location>
    <ligand>
        <name>Zn(2+)</name>
        <dbReference type="ChEBI" id="CHEBI:29105"/>
        <label>2</label>
    </ligand>
</feature>
<feature type="binding site" evidence="1">
    <location>
        <position position="179"/>
    </location>
    <ligand>
        <name>Zn(2+)</name>
        <dbReference type="ChEBI" id="CHEBI:29105"/>
        <label>2</label>
    </ligand>
</feature>
<feature type="binding site" evidence="1">
    <location>
        <position position="182"/>
    </location>
    <ligand>
        <name>Zn(2+)</name>
        <dbReference type="ChEBI" id="CHEBI:29105"/>
        <label>3</label>
    </ligand>
</feature>
<feature type="binding site" evidence="1">
    <location>
        <position position="216"/>
    </location>
    <ligand>
        <name>Zn(2+)</name>
        <dbReference type="ChEBI" id="CHEBI:29105"/>
        <label>2</label>
    </ligand>
</feature>
<feature type="binding site" evidence="1">
    <location>
        <position position="229"/>
    </location>
    <ligand>
        <name>Zn(2+)</name>
        <dbReference type="ChEBI" id="CHEBI:29105"/>
        <label>3</label>
    </ligand>
</feature>
<feature type="binding site" evidence="1">
    <location>
        <position position="231"/>
    </location>
    <ligand>
        <name>Zn(2+)</name>
        <dbReference type="ChEBI" id="CHEBI:29105"/>
        <label>3</label>
    </ligand>
</feature>
<feature type="binding site" evidence="1">
    <location>
        <position position="261"/>
    </location>
    <ligand>
        <name>Zn(2+)</name>
        <dbReference type="ChEBI" id="CHEBI:29105"/>
        <label>2</label>
    </ligand>
</feature>
<name>END4_SALPK</name>